<reference key="1">
    <citation type="journal article" date="2003" name="Am. J. Phys. Anthropol.">
        <title>Evolution of a pigmentation gene, the melanocortin-1 receptor, in primates.</title>
        <authorList>
            <person name="Mundy N.I."/>
            <person name="Kelly J."/>
        </authorList>
    </citation>
    <scope>NUCLEOTIDE SEQUENCE [GENOMIC DNA]</scope>
    <source>
        <strain>Isolate 1</strain>
    </source>
</reference>
<reference key="2">
    <citation type="journal article" date="2008" name="Am. J. Primatol.">
        <title>Variation of the melanocortin 1 receptor gene in the macaques.</title>
        <authorList>
            <person name="Nakayama K."/>
            <person name="Shotake T."/>
            <person name="Takeneka O."/>
            <person name="Ishida T."/>
        </authorList>
    </citation>
    <scope>NUCLEOTIDE SEQUENCE [GENOMIC DNA]</scope>
</reference>
<organism>
    <name type="scientific">Macaca sylvanus</name>
    <name type="common">Barbary macaque</name>
    <dbReference type="NCBI Taxonomy" id="9546"/>
    <lineage>
        <taxon>Eukaryota</taxon>
        <taxon>Metazoa</taxon>
        <taxon>Chordata</taxon>
        <taxon>Craniata</taxon>
        <taxon>Vertebrata</taxon>
        <taxon>Euteleostomi</taxon>
        <taxon>Mammalia</taxon>
        <taxon>Eutheria</taxon>
        <taxon>Euarchontoglires</taxon>
        <taxon>Primates</taxon>
        <taxon>Haplorrhini</taxon>
        <taxon>Catarrhini</taxon>
        <taxon>Cercopithecidae</taxon>
        <taxon>Cercopithecinae</taxon>
        <taxon>Macaca</taxon>
    </lineage>
</organism>
<keyword id="KW-1003">Cell membrane</keyword>
<keyword id="KW-0297">G-protein coupled receptor</keyword>
<keyword id="KW-0325">Glycoprotein</keyword>
<keyword id="KW-0449">Lipoprotein</keyword>
<keyword id="KW-0472">Membrane</keyword>
<keyword id="KW-0564">Palmitate</keyword>
<keyword id="KW-0675">Receptor</keyword>
<keyword id="KW-0807">Transducer</keyword>
<keyword id="KW-0812">Transmembrane</keyword>
<keyword id="KW-1133">Transmembrane helix</keyword>
<accession>Q864J6</accession>
<accession>A3KF96</accession>
<sequence>MPVQGSQRRLLGSLNSTPTATPHLGLAANQTGARCLEVSVPDGLFLSLGLVSLVENVLVVTAIAKNRNLHSPMYCFICCLALSDLLVSGSNMLETAVTLLLEAGALAARAAVVQQLDNVIDVITCSSMLSSLCFLGAIAVDRYISIFYALRYHSIVTLPRARRAVAAIWVASVLCSTLFIAYYDHAAVLLCLVVFFLAMLVLMAVLYVHMLARACQHAQGIARLHKRQRLAHQGFGLKGAATLTILLGIFFLCWGPFFLHLTLIVLCPQHPTCSCIFKNFNLFLALIICNAIIDPLIYAFRSQELRRTLKEVLLCSW</sequence>
<evidence type="ECO:0000250" key="1">
    <source>
        <dbReference type="UniProtKB" id="Q01726"/>
    </source>
</evidence>
<evidence type="ECO:0000255" key="2"/>
<evidence type="ECO:0000255" key="3">
    <source>
        <dbReference type="PROSITE-ProRule" id="PRU00521"/>
    </source>
</evidence>
<name>MSHR_MACSY</name>
<dbReference type="EMBL" id="AY205101">
    <property type="protein sequence ID" value="AAP30975.1"/>
    <property type="molecule type" value="Genomic_DNA"/>
</dbReference>
<dbReference type="EMBL" id="AB296227">
    <property type="protein sequence ID" value="BAF48459.1"/>
    <property type="molecule type" value="Genomic_DNA"/>
</dbReference>
<dbReference type="SMR" id="Q864J6"/>
<dbReference type="GlyCosmos" id="Q864J6">
    <property type="glycosylation" value="1 site, No reported glycans"/>
</dbReference>
<dbReference type="GO" id="GO:0005886">
    <property type="term" value="C:plasma membrane"/>
    <property type="evidence" value="ECO:0000250"/>
    <property type="project" value="UniProtKB"/>
</dbReference>
<dbReference type="GO" id="GO:0004980">
    <property type="term" value="F:melanocyte-stimulating hormone receptor activity"/>
    <property type="evidence" value="ECO:0007669"/>
    <property type="project" value="InterPro"/>
</dbReference>
<dbReference type="GO" id="GO:0007189">
    <property type="term" value="P:adenylate cyclase-activating G protein-coupled receptor signaling pathway"/>
    <property type="evidence" value="ECO:0007669"/>
    <property type="project" value="UniProtKB-ARBA"/>
</dbReference>
<dbReference type="CDD" id="cd15351">
    <property type="entry name" value="7tmA_MC1R"/>
    <property type="match status" value="1"/>
</dbReference>
<dbReference type="FunFam" id="1.20.1070.10:FF:000211">
    <property type="entry name" value="Melanocyte-stimulating hormone receptor"/>
    <property type="match status" value="1"/>
</dbReference>
<dbReference type="Gene3D" id="1.20.1070.10">
    <property type="entry name" value="Rhodopsin 7-helix transmembrane proteins"/>
    <property type="match status" value="1"/>
</dbReference>
<dbReference type="InterPro" id="IPR000276">
    <property type="entry name" value="GPCR_Rhodpsn"/>
</dbReference>
<dbReference type="InterPro" id="IPR017452">
    <property type="entry name" value="GPCR_Rhodpsn_7TM"/>
</dbReference>
<dbReference type="InterPro" id="IPR001671">
    <property type="entry name" value="Melcrt_ACTH_rcpt"/>
</dbReference>
<dbReference type="InterPro" id="IPR000761">
    <property type="entry name" value="MSH_rcpt"/>
</dbReference>
<dbReference type="PANTHER" id="PTHR22750">
    <property type="entry name" value="G-PROTEIN COUPLED RECEPTOR"/>
    <property type="match status" value="1"/>
</dbReference>
<dbReference type="Pfam" id="PF00001">
    <property type="entry name" value="7tm_1"/>
    <property type="match status" value="2"/>
</dbReference>
<dbReference type="PRINTS" id="PR00237">
    <property type="entry name" value="GPCRRHODOPSN"/>
</dbReference>
<dbReference type="PRINTS" id="PR00534">
    <property type="entry name" value="MCRFAMILY"/>
</dbReference>
<dbReference type="PRINTS" id="PR00536">
    <property type="entry name" value="MELNOCYTESHR"/>
</dbReference>
<dbReference type="SMART" id="SM01381">
    <property type="entry name" value="7TM_GPCR_Srsx"/>
    <property type="match status" value="1"/>
</dbReference>
<dbReference type="SUPFAM" id="SSF81321">
    <property type="entry name" value="Family A G protein-coupled receptor-like"/>
    <property type="match status" value="1"/>
</dbReference>
<dbReference type="PROSITE" id="PS00237">
    <property type="entry name" value="G_PROTEIN_RECEP_F1_1"/>
    <property type="match status" value="1"/>
</dbReference>
<dbReference type="PROSITE" id="PS50262">
    <property type="entry name" value="G_PROTEIN_RECEP_F1_2"/>
    <property type="match status" value="1"/>
</dbReference>
<protein>
    <recommendedName>
        <fullName>Melanocyte-stimulating hormone receptor</fullName>
        <shortName>MSH-R</shortName>
    </recommendedName>
    <alternativeName>
        <fullName>Melanocortin receptor 1</fullName>
        <shortName>MC1-R</shortName>
    </alternativeName>
</protein>
<feature type="chain" id="PRO_0000069831" description="Melanocyte-stimulating hormone receptor">
    <location>
        <begin position="1"/>
        <end position="317"/>
    </location>
</feature>
<feature type="topological domain" description="Extracellular" evidence="2">
    <location>
        <begin position="1"/>
        <end position="37"/>
    </location>
</feature>
<feature type="transmembrane region" description="Helical; Name=1" evidence="2">
    <location>
        <begin position="38"/>
        <end position="63"/>
    </location>
</feature>
<feature type="topological domain" description="Cytoplasmic" evidence="2">
    <location>
        <begin position="64"/>
        <end position="72"/>
    </location>
</feature>
<feature type="transmembrane region" description="Helical; Name=2" evidence="2">
    <location>
        <begin position="73"/>
        <end position="93"/>
    </location>
</feature>
<feature type="topological domain" description="Extracellular" evidence="2">
    <location>
        <begin position="94"/>
        <end position="118"/>
    </location>
</feature>
<feature type="transmembrane region" description="Helical; Name=3" evidence="2">
    <location>
        <begin position="119"/>
        <end position="140"/>
    </location>
</feature>
<feature type="topological domain" description="Cytoplasmic" evidence="2">
    <location>
        <begin position="141"/>
        <end position="163"/>
    </location>
</feature>
<feature type="transmembrane region" description="Helical; Name=4" evidence="2">
    <location>
        <begin position="164"/>
        <end position="183"/>
    </location>
</feature>
<feature type="topological domain" description="Extracellular" evidence="2">
    <location>
        <begin position="184"/>
        <end position="191"/>
    </location>
</feature>
<feature type="transmembrane region" description="Helical; Name=5" evidence="2">
    <location>
        <begin position="192"/>
        <end position="211"/>
    </location>
</feature>
<feature type="topological domain" description="Cytoplasmic" evidence="2">
    <location>
        <begin position="212"/>
        <end position="240"/>
    </location>
</feature>
<feature type="transmembrane region" description="Helical; Name=6" evidence="2">
    <location>
        <begin position="241"/>
        <end position="266"/>
    </location>
</feature>
<feature type="topological domain" description="Extracellular" evidence="2">
    <location>
        <begin position="267"/>
        <end position="279"/>
    </location>
</feature>
<feature type="transmembrane region" description="Helical; Name=7" evidence="2">
    <location>
        <begin position="280"/>
        <end position="300"/>
    </location>
</feature>
<feature type="topological domain" description="Cytoplasmic" evidence="2">
    <location>
        <begin position="301"/>
        <end position="317"/>
    </location>
</feature>
<feature type="lipid moiety-binding region" description="S-palmitoyl cysteine" evidence="2">
    <location>
        <position position="315"/>
    </location>
</feature>
<feature type="glycosylation site" description="N-linked (GlcNAc...) asparagine" evidence="2">
    <location>
        <position position="29"/>
    </location>
</feature>
<comment type="function">
    <text evidence="1">Receptor for MSH (alpha, beta and gamma) and ACTH. The activity of this receptor is mediated by G proteins which activate adenylate cyclase. Mediates melanogenesis, the production of eumelanin (black/brown) and phaeomelanin (red/yellow), via regulation of cAMP signaling in melanocytes.</text>
</comment>
<comment type="subunit">
    <text evidence="1">Interacts with MGRN1, but does not undergo MGRN1-mediated ubiquitination; this interaction competes with GNAS-binding and thus inhibits agonist-induced cAMP production. Interacts with OPN3; the interaction results in a decrease in MC1R-mediated cAMP signaling and ultimately a decrease in melanin production in melanocytes.</text>
</comment>
<comment type="subcellular location">
    <subcellularLocation>
        <location evidence="1">Cell membrane</location>
        <topology evidence="2">Multi-pass membrane protein</topology>
    </subcellularLocation>
</comment>
<comment type="similarity">
    <text evidence="3">Belongs to the G-protein coupled receptor 1 family.</text>
</comment>
<gene>
    <name type="primary">MC1R</name>
</gene>
<proteinExistence type="inferred from homology"/>